<organism>
    <name type="scientific">Arabidopsis thaliana</name>
    <name type="common">Mouse-ear cress</name>
    <dbReference type="NCBI Taxonomy" id="3702"/>
    <lineage>
        <taxon>Eukaryota</taxon>
        <taxon>Viridiplantae</taxon>
        <taxon>Streptophyta</taxon>
        <taxon>Embryophyta</taxon>
        <taxon>Tracheophyta</taxon>
        <taxon>Spermatophyta</taxon>
        <taxon>Magnoliopsida</taxon>
        <taxon>eudicotyledons</taxon>
        <taxon>Gunneridae</taxon>
        <taxon>Pentapetalae</taxon>
        <taxon>rosids</taxon>
        <taxon>malvids</taxon>
        <taxon>Brassicales</taxon>
        <taxon>Brassicaceae</taxon>
        <taxon>Camelineae</taxon>
        <taxon>Arabidopsis</taxon>
    </lineage>
</organism>
<comment type="function">
    <text evidence="1">The PI(3,5)P2 regulatory complex regulates both the synthesis and turnover of phosphatidylinositol 3,5-bisphosphate (PtdIns(3,5)P2). Required for autophagy (By similarity).</text>
</comment>
<comment type="subunit">
    <text evidence="1">Component of the PI(3,5)P2 regulatory complex at least composed of ATG18, SAC/FIG4, FAB1 and VAC14.</text>
</comment>
<comment type="subcellular location">
    <subcellularLocation>
        <location evidence="1">Preautophagosomal structure membrane</location>
        <topology evidence="1">Peripheral membrane protein</topology>
    </subcellularLocation>
    <subcellularLocation>
        <location evidence="1">Vacuole membrane</location>
        <topology evidence="1">Peripheral membrane protein</topology>
    </subcellularLocation>
    <text evidence="1">Peripheral membrane protein of pre-autophagosomal structure (PAS) and vacuole.</text>
</comment>
<comment type="tissue specificity">
    <text evidence="2">Expressed in roots, stems, flowers and leaves.</text>
</comment>
<comment type="domain">
    <text evidence="1">The first protein part may form a beta-propeller domain involved in specific binding to phosphatidylinositol 3,5-bisphosphate (PIP2), leading to the association of the protein to the membrane.</text>
</comment>
<comment type="similarity">
    <text evidence="3">Belongs to the WD repeat PROPPIN family.</text>
</comment>
<comment type="sequence caution" evidence="3">
    <conflict type="erroneous initiation">
        <sequence resource="EMBL-CDS" id="AAB86441"/>
    </conflict>
    <text>Truncated N-terminus.</text>
</comment>
<reference key="1">
    <citation type="journal article" date="1999" name="Nature">
        <title>Sequence and analysis of chromosome 2 of the plant Arabidopsis thaliana.</title>
        <authorList>
            <person name="Lin X."/>
            <person name="Kaul S."/>
            <person name="Rounsley S.D."/>
            <person name="Shea T.P."/>
            <person name="Benito M.-I."/>
            <person name="Town C.D."/>
            <person name="Fujii C.Y."/>
            <person name="Mason T.M."/>
            <person name="Bowman C.L."/>
            <person name="Barnstead M.E."/>
            <person name="Feldblyum T.V."/>
            <person name="Buell C.R."/>
            <person name="Ketchum K.A."/>
            <person name="Lee J.J."/>
            <person name="Ronning C.M."/>
            <person name="Koo H.L."/>
            <person name="Moffat K.S."/>
            <person name="Cronin L.A."/>
            <person name="Shen M."/>
            <person name="Pai G."/>
            <person name="Van Aken S."/>
            <person name="Umayam L."/>
            <person name="Tallon L.J."/>
            <person name="Gill J.E."/>
            <person name="Adams M.D."/>
            <person name="Carrera A.J."/>
            <person name="Creasy T.H."/>
            <person name="Goodman H.M."/>
            <person name="Somerville C.R."/>
            <person name="Copenhaver G.P."/>
            <person name="Preuss D."/>
            <person name="Nierman W.C."/>
            <person name="White O."/>
            <person name="Eisen J.A."/>
            <person name="Salzberg S.L."/>
            <person name="Fraser C.M."/>
            <person name="Venter J.C."/>
        </authorList>
    </citation>
    <scope>NUCLEOTIDE SEQUENCE [LARGE SCALE GENOMIC DNA]</scope>
    <source>
        <strain>cv. Columbia</strain>
    </source>
</reference>
<reference key="2">
    <citation type="journal article" date="2017" name="Plant J.">
        <title>Araport11: a complete reannotation of the Arabidopsis thaliana reference genome.</title>
        <authorList>
            <person name="Cheng C.Y."/>
            <person name="Krishnakumar V."/>
            <person name="Chan A.P."/>
            <person name="Thibaud-Nissen F."/>
            <person name="Schobel S."/>
            <person name="Town C.D."/>
        </authorList>
    </citation>
    <scope>GENOME REANNOTATION</scope>
    <source>
        <strain>cv. Columbia</strain>
    </source>
</reference>
<reference key="3">
    <citation type="journal article" date="2002" name="Science">
        <title>Functional annotation of a full-length Arabidopsis cDNA collection.</title>
        <authorList>
            <person name="Seki M."/>
            <person name="Narusaka M."/>
            <person name="Kamiya A."/>
            <person name="Ishida J."/>
            <person name="Satou M."/>
            <person name="Sakurai T."/>
            <person name="Nakajima M."/>
            <person name="Enju A."/>
            <person name="Akiyama K."/>
            <person name="Oono Y."/>
            <person name="Muramatsu M."/>
            <person name="Hayashizaki Y."/>
            <person name="Kawai J."/>
            <person name="Carninci P."/>
            <person name="Itoh M."/>
            <person name="Ishii Y."/>
            <person name="Arakawa T."/>
            <person name="Shibata K."/>
            <person name="Shinagawa A."/>
            <person name="Shinozaki K."/>
        </authorList>
    </citation>
    <scope>NUCLEOTIDE SEQUENCE [LARGE SCALE MRNA]</scope>
    <source>
        <strain>cv. Columbia</strain>
    </source>
</reference>
<reference key="4">
    <citation type="submission" date="2006-09" db="EMBL/GenBank/DDBJ databases">
        <title>Arabidopsis ORF Clones.</title>
        <authorList>
            <person name="Bautista V.R."/>
            <person name="Kim C.J."/>
            <person name="Chen H."/>
            <person name="Quinitio C."/>
            <person name="Ecker J.R."/>
        </authorList>
    </citation>
    <scope>NUCLEOTIDE SEQUENCE [LARGE SCALE MRNA]</scope>
    <source>
        <strain>cv. Columbia</strain>
    </source>
</reference>
<reference key="5">
    <citation type="journal article" date="2005" name="Plant J.">
        <title>AtATG18a is required for the formation of autophagosomes during nutrient stress and senescence in Arabidopsis thaliana.</title>
        <authorList>
            <person name="Xiong Y."/>
            <person name="Contento A.L."/>
            <person name="Bassham D.C."/>
        </authorList>
    </citation>
    <scope>GENE FAMILY</scope>
    <scope>TISSUE SPECIFICITY</scope>
</reference>
<name>AT18C_ARATH</name>
<dbReference type="EMBL" id="AC002409">
    <property type="protein sequence ID" value="AAB86441.1"/>
    <property type="status" value="ALT_INIT"/>
    <property type="molecule type" value="Genomic_DNA"/>
</dbReference>
<dbReference type="EMBL" id="CP002685">
    <property type="protein sequence ID" value="AEC09882.1"/>
    <property type="molecule type" value="Genomic_DNA"/>
</dbReference>
<dbReference type="EMBL" id="CP002685">
    <property type="protein sequence ID" value="AEC09883.1"/>
    <property type="molecule type" value="Genomic_DNA"/>
</dbReference>
<dbReference type="EMBL" id="AK117701">
    <property type="protein sequence ID" value="BAC42353.1"/>
    <property type="molecule type" value="mRNA"/>
</dbReference>
<dbReference type="EMBL" id="BT028913">
    <property type="protein sequence ID" value="ABI49460.1"/>
    <property type="molecule type" value="mRNA"/>
</dbReference>
<dbReference type="PIR" id="T00745">
    <property type="entry name" value="T00745"/>
</dbReference>
<dbReference type="RefSeq" id="NP_181613.2">
    <property type="nucleotide sequence ID" value="NM_129644.4"/>
</dbReference>
<dbReference type="RefSeq" id="NP_973650.1">
    <property type="nucleotide sequence ID" value="NM_201921.2"/>
</dbReference>
<dbReference type="SMR" id="Q8GYD7"/>
<dbReference type="FunCoup" id="Q8GYD7">
    <property type="interactions" value="4255"/>
</dbReference>
<dbReference type="STRING" id="3702.Q8GYD7"/>
<dbReference type="PaxDb" id="3702-AT2G40810.1"/>
<dbReference type="ProteomicsDB" id="246523"/>
<dbReference type="EnsemblPlants" id="AT2G40810.1">
    <property type="protein sequence ID" value="AT2G40810.1"/>
    <property type="gene ID" value="AT2G40810"/>
</dbReference>
<dbReference type="EnsemblPlants" id="AT2G40810.2">
    <property type="protein sequence ID" value="AT2G40810.2"/>
    <property type="gene ID" value="AT2G40810"/>
</dbReference>
<dbReference type="GeneID" id="818678"/>
<dbReference type="Gramene" id="AT2G40810.1">
    <property type="protein sequence ID" value="AT2G40810.1"/>
    <property type="gene ID" value="AT2G40810"/>
</dbReference>
<dbReference type="Gramene" id="AT2G40810.2">
    <property type="protein sequence ID" value="AT2G40810.2"/>
    <property type="gene ID" value="AT2G40810"/>
</dbReference>
<dbReference type="KEGG" id="ath:AT2G40810"/>
<dbReference type="Araport" id="AT2G40810"/>
<dbReference type="TAIR" id="AT2G40810">
    <property type="gene designation" value="ATG18C"/>
</dbReference>
<dbReference type="eggNOG" id="KOG2111">
    <property type="taxonomic scope" value="Eukaryota"/>
</dbReference>
<dbReference type="HOGENOM" id="CLU_025895_2_1_1"/>
<dbReference type="InParanoid" id="Q8GYD7"/>
<dbReference type="OMA" id="GGPQCMC"/>
<dbReference type="PhylomeDB" id="Q8GYD7"/>
<dbReference type="PRO" id="PR:Q8GYD7"/>
<dbReference type="Proteomes" id="UP000006548">
    <property type="component" value="Chromosome 2"/>
</dbReference>
<dbReference type="ExpressionAtlas" id="Q8GYD7">
    <property type="expression patterns" value="baseline and differential"/>
</dbReference>
<dbReference type="GO" id="GO:0034045">
    <property type="term" value="C:phagophore assembly site membrane"/>
    <property type="evidence" value="ECO:0007669"/>
    <property type="project" value="UniProtKB-SubCell"/>
</dbReference>
<dbReference type="GO" id="GO:0005774">
    <property type="term" value="C:vacuolar membrane"/>
    <property type="evidence" value="ECO:0007669"/>
    <property type="project" value="UniProtKB-SubCell"/>
</dbReference>
<dbReference type="GO" id="GO:0006914">
    <property type="term" value="P:autophagy"/>
    <property type="evidence" value="ECO:0007669"/>
    <property type="project" value="UniProtKB-KW"/>
</dbReference>
<dbReference type="GO" id="GO:0015031">
    <property type="term" value="P:protein transport"/>
    <property type="evidence" value="ECO:0007669"/>
    <property type="project" value="UniProtKB-KW"/>
</dbReference>
<dbReference type="FunFam" id="2.130.10.10:FF:000610">
    <property type="entry name" value="Autophagy-related protein 18c"/>
    <property type="match status" value="1"/>
</dbReference>
<dbReference type="Gene3D" id="2.130.10.10">
    <property type="entry name" value="YVTN repeat-like/Quinoprotein amine dehydrogenase"/>
    <property type="match status" value="2"/>
</dbReference>
<dbReference type="InterPro" id="IPR048720">
    <property type="entry name" value="PROPPIN"/>
</dbReference>
<dbReference type="InterPro" id="IPR015943">
    <property type="entry name" value="WD40/YVTN_repeat-like_dom_sf"/>
</dbReference>
<dbReference type="InterPro" id="IPR036322">
    <property type="entry name" value="WD40_repeat_dom_sf"/>
</dbReference>
<dbReference type="InterPro" id="IPR001680">
    <property type="entry name" value="WD40_rpt"/>
</dbReference>
<dbReference type="PANTHER" id="PTHR11227">
    <property type="entry name" value="WD-REPEAT PROTEIN INTERACTING WITH PHOSPHOINOSIDES WIPI -RELATED"/>
    <property type="match status" value="1"/>
</dbReference>
<dbReference type="Pfam" id="PF21032">
    <property type="entry name" value="PROPPIN"/>
    <property type="match status" value="1"/>
</dbReference>
<dbReference type="SMART" id="SM00320">
    <property type="entry name" value="WD40"/>
    <property type="match status" value="3"/>
</dbReference>
<dbReference type="SUPFAM" id="SSF50978">
    <property type="entry name" value="WD40 repeat-like"/>
    <property type="match status" value="1"/>
</dbReference>
<protein>
    <recommendedName>
        <fullName>Autophagy-related protein 18c</fullName>
        <shortName>AtATG18c</shortName>
    </recommendedName>
</protein>
<gene>
    <name type="primary">ATG18C</name>
    <name type="ordered locus">At2g40810</name>
    <name type="ORF">T20B5.1</name>
</gene>
<accession>Q8GYD7</accession>
<accession>O22195</accession>
<evidence type="ECO:0000250" key="1"/>
<evidence type="ECO:0000269" key="2">
    <source>
    </source>
</evidence>
<evidence type="ECO:0000305" key="3"/>
<keyword id="KW-0072">Autophagy</keyword>
<keyword id="KW-0472">Membrane</keyword>
<keyword id="KW-0653">Protein transport</keyword>
<keyword id="KW-1185">Reference proteome</keyword>
<keyword id="KW-0677">Repeat</keyword>
<keyword id="KW-0813">Transport</keyword>
<keyword id="KW-0926">Vacuole</keyword>
<keyword id="KW-0853">WD repeat</keyword>
<feature type="chain" id="PRO_0000421881" description="Autophagy-related protein 18c">
    <location>
        <begin position="1"/>
        <end position="393"/>
    </location>
</feature>
<feature type="repeat" description="WD 1">
    <location>
        <begin position="27"/>
        <end position="65"/>
    </location>
</feature>
<feature type="repeat" description="WD 2">
    <location>
        <begin position="70"/>
        <end position="114"/>
    </location>
</feature>
<feature type="repeat" description="WD 3">
    <location>
        <begin position="199"/>
        <end position="239"/>
    </location>
</feature>
<feature type="repeat" description="WD 4">
    <location>
        <begin position="244"/>
        <end position="283"/>
    </location>
</feature>
<sequence>MSSTVSNPQGILQPGSFLLPESESMKKEEAELVSVCWNQDSSCFAAGTSHGFRIYNCEPFKETFRRELKDGGFKIVEMLFRSNILALVGGGPNSQYPSSKVLIWDDHQSRCISEFAFRSEIRAVKLRRDRIVVVLEHKIYVYNFMDLRLLHQIETQANPRGLCCLSHHSNTSVLACPGLNRGEIRVEHFGLNMVQIINAHDSSIACMTLTLDGLLLATASTKGTLIRIFNTMDGTRLQEVRRGVDRADIYSIALSPNVQWLAVSSDKGTVHIFSLRVRVVGEDSYSTENGALLTQQNYSNSLQGLVSPTIGTNPGSSLSFMRGVLPKYFSSEWSYAQFHVSEVTQFFAAFGSNNTVAIIGMDGSFYRCSFDPVNGGEMGQLEYIHFMKMDNRP</sequence>
<proteinExistence type="evidence at transcript level"/>